<organism>
    <name type="scientific">Bacillus licheniformis (strain ATCC 14580 / DSM 13 / JCM 2505 / CCUG 7422 / NBRC 12200 / NCIMB 9375 / NCTC 10341 / NRRL NRS-1264 / Gibson 46)</name>
    <dbReference type="NCBI Taxonomy" id="279010"/>
    <lineage>
        <taxon>Bacteria</taxon>
        <taxon>Bacillati</taxon>
        <taxon>Bacillota</taxon>
        <taxon>Bacilli</taxon>
        <taxon>Bacillales</taxon>
        <taxon>Bacillaceae</taxon>
        <taxon>Bacillus</taxon>
    </lineage>
</organism>
<keyword id="KW-0067">ATP-binding</keyword>
<keyword id="KW-0378">Hydrolase</keyword>
<keyword id="KW-0547">Nucleotide-binding</keyword>
<keyword id="KW-1185">Reference proteome</keyword>
<feature type="chain" id="PRO_0000184988" description="5-oxoprolinase subunit A">
    <location>
        <begin position="1"/>
        <end position="253"/>
    </location>
</feature>
<sequence length="253" mass="27313">MNQVDLNCDLGESFGAYKIGLDEEILEFVTSANIACGFHAGDPGVMRKTVKMAAEKGVKIGAHPGLPDLAGFGRRNMAITPEEAYDLVVYQIGALSGFLKAEGVTMQHVKPHGALYNMAAQSRELSDAIARAVYQTDPELILFGLAGSELVLAGERAGLKTAHEVFADRTYQEDGTLTSRRQNDALIQDDDEAVGQVIRMVKEGKVRSLQGTDVSLKADTVCIHGDGAHALHFAKKIRRELRAADIKVQAFST</sequence>
<dbReference type="EC" id="3.5.2.9" evidence="1"/>
<dbReference type="EMBL" id="AE017333">
    <property type="protein sequence ID" value="AAU39454.1"/>
    <property type="molecule type" value="Genomic_DNA"/>
</dbReference>
<dbReference type="EMBL" id="CP000002">
    <property type="protein sequence ID" value="AAU22096.1"/>
    <property type="molecule type" value="Genomic_DNA"/>
</dbReference>
<dbReference type="RefSeq" id="WP_009330162.1">
    <property type="nucleotide sequence ID" value="NC_006322.1"/>
</dbReference>
<dbReference type="SMR" id="Q65NB0"/>
<dbReference type="STRING" id="279010.BL02806"/>
<dbReference type="GeneID" id="92858543"/>
<dbReference type="KEGG" id="bld:BLi00498"/>
<dbReference type="KEGG" id="bli:BL02806"/>
<dbReference type="PATRIC" id="fig|279010.13.peg.486"/>
<dbReference type="eggNOG" id="COG1540">
    <property type="taxonomic scope" value="Bacteria"/>
</dbReference>
<dbReference type="HOGENOM" id="CLU_069535_0_0_9"/>
<dbReference type="Proteomes" id="UP000000606">
    <property type="component" value="Chromosome"/>
</dbReference>
<dbReference type="GO" id="GO:0017168">
    <property type="term" value="F:5-oxoprolinase (ATP-hydrolyzing) activity"/>
    <property type="evidence" value="ECO:0007669"/>
    <property type="project" value="UniProtKB-UniRule"/>
</dbReference>
<dbReference type="GO" id="GO:0005524">
    <property type="term" value="F:ATP binding"/>
    <property type="evidence" value="ECO:0007669"/>
    <property type="project" value="UniProtKB-UniRule"/>
</dbReference>
<dbReference type="GO" id="GO:0005975">
    <property type="term" value="P:carbohydrate metabolic process"/>
    <property type="evidence" value="ECO:0007669"/>
    <property type="project" value="InterPro"/>
</dbReference>
<dbReference type="CDD" id="cd10787">
    <property type="entry name" value="LamB_YcsF_like"/>
    <property type="match status" value="1"/>
</dbReference>
<dbReference type="Gene3D" id="3.20.20.370">
    <property type="entry name" value="Glycoside hydrolase/deacetylase"/>
    <property type="match status" value="1"/>
</dbReference>
<dbReference type="HAMAP" id="MF_00691">
    <property type="entry name" value="PxpA"/>
    <property type="match status" value="1"/>
</dbReference>
<dbReference type="InterPro" id="IPR011330">
    <property type="entry name" value="Glyco_hydro/deAcase_b/a-brl"/>
</dbReference>
<dbReference type="InterPro" id="IPR005501">
    <property type="entry name" value="LamB/YcsF/PxpA-like"/>
</dbReference>
<dbReference type="NCBIfam" id="NF003813">
    <property type="entry name" value="PRK05406.1-2"/>
    <property type="match status" value="1"/>
</dbReference>
<dbReference type="NCBIfam" id="NF003814">
    <property type="entry name" value="PRK05406.1-3"/>
    <property type="match status" value="1"/>
</dbReference>
<dbReference type="NCBIfam" id="NF003816">
    <property type="entry name" value="PRK05406.1-5"/>
    <property type="match status" value="1"/>
</dbReference>
<dbReference type="PANTHER" id="PTHR30292:SF0">
    <property type="entry name" value="5-OXOPROLINASE SUBUNIT A"/>
    <property type="match status" value="1"/>
</dbReference>
<dbReference type="PANTHER" id="PTHR30292">
    <property type="entry name" value="UNCHARACTERIZED PROTEIN YBGL-RELATED"/>
    <property type="match status" value="1"/>
</dbReference>
<dbReference type="Pfam" id="PF03746">
    <property type="entry name" value="LamB_YcsF"/>
    <property type="match status" value="1"/>
</dbReference>
<dbReference type="SUPFAM" id="SSF88713">
    <property type="entry name" value="Glycoside hydrolase/deacetylase"/>
    <property type="match status" value="1"/>
</dbReference>
<proteinExistence type="inferred from homology"/>
<comment type="function">
    <text evidence="1">Catalyzes the cleavage of 5-oxoproline to form L-glutamate coupled to the hydrolysis of ATP to ADP and inorganic phosphate.</text>
</comment>
<comment type="catalytic activity">
    <reaction evidence="1">
        <text>5-oxo-L-proline + ATP + 2 H2O = L-glutamate + ADP + phosphate + H(+)</text>
        <dbReference type="Rhea" id="RHEA:10348"/>
        <dbReference type="ChEBI" id="CHEBI:15377"/>
        <dbReference type="ChEBI" id="CHEBI:15378"/>
        <dbReference type="ChEBI" id="CHEBI:29985"/>
        <dbReference type="ChEBI" id="CHEBI:30616"/>
        <dbReference type="ChEBI" id="CHEBI:43474"/>
        <dbReference type="ChEBI" id="CHEBI:58402"/>
        <dbReference type="ChEBI" id="CHEBI:456216"/>
        <dbReference type="EC" id="3.5.2.9"/>
    </reaction>
</comment>
<comment type="subunit">
    <text evidence="1">Forms a complex composed of PxpA, PxpB and PxpC.</text>
</comment>
<comment type="similarity">
    <text evidence="1">Belongs to the LamB/PxpA family.</text>
</comment>
<accession>Q65NB0</accession>
<accession>Q62YR2</accession>
<gene>
    <name evidence="1" type="primary">pxpA</name>
    <name type="ordered locus">BLi00498</name>
    <name type="ordered locus">BL02806</name>
</gene>
<protein>
    <recommendedName>
        <fullName evidence="1">5-oxoprolinase subunit A</fullName>
        <shortName evidence="1">5-OPase subunit A</shortName>
        <ecNumber evidence="1">3.5.2.9</ecNumber>
    </recommendedName>
    <alternativeName>
        <fullName evidence="1">5-oxoprolinase (ATP-hydrolyzing) subunit A</fullName>
    </alternativeName>
</protein>
<name>PXPA_BACLD</name>
<reference key="1">
    <citation type="journal article" date="2004" name="J. Mol. Microbiol. Biotechnol.">
        <title>The complete genome sequence of Bacillus licheniformis DSM13, an organism with great industrial potential.</title>
        <authorList>
            <person name="Veith B."/>
            <person name="Herzberg C."/>
            <person name="Steckel S."/>
            <person name="Feesche J."/>
            <person name="Maurer K.H."/>
            <person name="Ehrenreich P."/>
            <person name="Baeumer S."/>
            <person name="Henne A."/>
            <person name="Liesegang H."/>
            <person name="Merkl R."/>
            <person name="Ehrenreich A."/>
            <person name="Gottschalk G."/>
        </authorList>
    </citation>
    <scope>NUCLEOTIDE SEQUENCE [LARGE SCALE GENOMIC DNA]</scope>
    <source>
        <strain>ATCC 14580 / DSM 13 / JCM 2505 / CCUG 7422 / NBRC 12200 / NCIMB 9375 / NCTC 10341 / NRRL NRS-1264 / Gibson 46</strain>
    </source>
</reference>
<reference key="2">
    <citation type="journal article" date="2004" name="Genome Biol.">
        <title>Complete genome sequence of the industrial bacterium Bacillus licheniformis and comparisons with closely related Bacillus species.</title>
        <authorList>
            <person name="Rey M.W."/>
            <person name="Ramaiya P."/>
            <person name="Nelson B.A."/>
            <person name="Brody-Karpin S.D."/>
            <person name="Zaretsky E.J."/>
            <person name="Tang M."/>
            <person name="Lopez de Leon A."/>
            <person name="Xiang H."/>
            <person name="Gusti V."/>
            <person name="Clausen I.G."/>
            <person name="Olsen P.B."/>
            <person name="Rasmussen M.D."/>
            <person name="Andersen J.T."/>
            <person name="Joergensen P.L."/>
            <person name="Larsen T.S."/>
            <person name="Sorokin A."/>
            <person name="Bolotin A."/>
            <person name="Lapidus A."/>
            <person name="Galleron N."/>
            <person name="Ehrlich S.D."/>
            <person name="Berka R.M."/>
        </authorList>
    </citation>
    <scope>NUCLEOTIDE SEQUENCE [LARGE SCALE GENOMIC DNA]</scope>
    <source>
        <strain>ATCC 14580 / DSM 13 / JCM 2505 / CCUG 7422 / NBRC 12200 / NCIMB 9375 / NCTC 10341 / NRRL NRS-1264 / Gibson 46</strain>
    </source>
</reference>
<evidence type="ECO:0000255" key="1">
    <source>
        <dbReference type="HAMAP-Rule" id="MF_00691"/>
    </source>
</evidence>